<accession>O59209</accession>
<organism>
    <name type="scientific">Pyrococcus horikoshii (strain ATCC 700860 / DSM 12428 / JCM 9974 / NBRC 100139 / OT-3)</name>
    <dbReference type="NCBI Taxonomy" id="70601"/>
    <lineage>
        <taxon>Archaea</taxon>
        <taxon>Methanobacteriati</taxon>
        <taxon>Methanobacteriota</taxon>
        <taxon>Thermococci</taxon>
        <taxon>Thermococcales</taxon>
        <taxon>Thermococcaceae</taxon>
        <taxon>Pyrococcus</taxon>
    </lineage>
</organism>
<protein>
    <recommendedName>
        <fullName evidence="1">Type 2 DNA topoisomerase 6 subunit A</fullName>
        <ecNumber evidence="1">5.6.2.2</ecNumber>
    </recommendedName>
    <alternativeName>
        <fullName evidence="1">Type II DNA topoisomerase VI subunit A</fullName>
    </alternativeName>
</protein>
<proteinExistence type="inferred from homology"/>
<gene>
    <name evidence="1" type="primary">top6A</name>
    <name type="ordered locus">PH1563</name>
</gene>
<sequence>MKLKRQKPKEKFSYDPQKVLKKLEDLAWKILEEAKSGKNPYFDVPTRGLNNVYFDEESRLIRLGDRLSRRYFLNVAHARKFMQTLILMAYIKRLVSEGKHASLREAYYANKHTVPGTRENTFEDQSESDPIIEDLERMLGVLREEMHITADRRGYIYGDIVIKDGEDEFNASKLGTGGWAVPGTVEHIQFPEINVDYVLVVETAAMADRLIEEKYPKRENCLIVATQGQASRGVRRLIHRLHYEEGLPIIVFTDGDPYGWYIYSTIKRGSINLAYLSEKLATPDAKFVGMTMDDIKEYNLENVTEKLKGIPPDKKGGPTGDYKRLIEELNYPWFQDKEWQRQLKLALKWGVRIEQQALANKSLEFVAKEYLPEKIREGKLLP</sequence>
<keyword id="KW-0067">ATP-binding</keyword>
<keyword id="KW-0238">DNA-binding</keyword>
<keyword id="KW-0413">Isomerase</keyword>
<keyword id="KW-0460">Magnesium</keyword>
<keyword id="KW-0479">Metal-binding</keyword>
<keyword id="KW-0547">Nucleotide-binding</keyword>
<keyword id="KW-0799">Topoisomerase</keyword>
<comment type="function">
    <text evidence="1">Relaxes both positive and negative superturns and exhibits a strong decatenase activity.</text>
</comment>
<comment type="catalytic activity">
    <reaction evidence="1">
        <text>ATP-dependent breakage, passage and rejoining of double-stranded DNA.</text>
        <dbReference type="EC" id="5.6.2.2"/>
    </reaction>
</comment>
<comment type="cofactor">
    <cofactor evidence="1">
        <name>Mg(2+)</name>
        <dbReference type="ChEBI" id="CHEBI:18420"/>
    </cofactor>
</comment>
<comment type="subunit">
    <text evidence="1">Homodimer. Heterotetramer of two Top6A and two Top6B chains.</text>
</comment>
<comment type="similarity">
    <text evidence="1">Belongs to the TOP6A family.</text>
</comment>
<comment type="sequence caution" evidence="3">
    <conflict type="erroneous initiation">
        <sequence resource="EMBL-CDS" id="BAA30675"/>
    </conflict>
</comment>
<reference key="1">
    <citation type="journal article" date="1998" name="DNA Res.">
        <title>Complete sequence and gene organization of the genome of a hyper-thermophilic archaebacterium, Pyrococcus horikoshii OT3.</title>
        <authorList>
            <person name="Kawarabayasi Y."/>
            <person name="Sawada M."/>
            <person name="Horikawa H."/>
            <person name="Haikawa Y."/>
            <person name="Hino Y."/>
            <person name="Yamamoto S."/>
            <person name="Sekine M."/>
            <person name="Baba S."/>
            <person name="Kosugi H."/>
            <person name="Hosoyama A."/>
            <person name="Nagai Y."/>
            <person name="Sakai M."/>
            <person name="Ogura K."/>
            <person name="Otsuka R."/>
            <person name="Nakazawa H."/>
            <person name="Takamiya M."/>
            <person name="Ohfuku Y."/>
            <person name="Funahashi T."/>
            <person name="Tanaka T."/>
            <person name="Kudoh Y."/>
            <person name="Yamazaki J."/>
            <person name="Kushida N."/>
            <person name="Oguchi A."/>
            <person name="Aoki K."/>
            <person name="Yoshizawa T."/>
            <person name="Nakamura Y."/>
            <person name="Robb F.T."/>
            <person name="Horikoshi K."/>
            <person name="Masuchi Y."/>
            <person name="Shizuya H."/>
            <person name="Kikuchi H."/>
        </authorList>
    </citation>
    <scope>NUCLEOTIDE SEQUENCE [LARGE SCALE GENOMIC DNA]</scope>
    <source>
        <strain>ATCC 700860 / DSM 12428 / JCM 9974 / NBRC 100139 / OT-3</strain>
    </source>
</reference>
<dbReference type="EC" id="5.6.2.2" evidence="1"/>
<dbReference type="EMBL" id="BA000001">
    <property type="protein sequence ID" value="BAA30675.1"/>
    <property type="status" value="ALT_INIT"/>
    <property type="molecule type" value="Genomic_DNA"/>
</dbReference>
<dbReference type="PIR" id="C71034">
    <property type="entry name" value="C71034"/>
</dbReference>
<dbReference type="RefSeq" id="WP_048053428.1">
    <property type="nucleotide sequence ID" value="NC_000961.1"/>
</dbReference>
<dbReference type="SMR" id="O59209"/>
<dbReference type="STRING" id="70601.gene:9378553"/>
<dbReference type="EnsemblBacteria" id="BAA30675">
    <property type="protein sequence ID" value="BAA30675"/>
    <property type="gene ID" value="BAA30675"/>
</dbReference>
<dbReference type="GeneID" id="1443881"/>
<dbReference type="KEGG" id="pho:PH1563"/>
<dbReference type="eggNOG" id="arCOG04143">
    <property type="taxonomic scope" value="Archaea"/>
</dbReference>
<dbReference type="OrthoDB" id="5866at2157"/>
<dbReference type="Proteomes" id="UP000000752">
    <property type="component" value="Chromosome"/>
</dbReference>
<dbReference type="GO" id="GO:0005694">
    <property type="term" value="C:chromosome"/>
    <property type="evidence" value="ECO:0007669"/>
    <property type="project" value="InterPro"/>
</dbReference>
<dbReference type="GO" id="GO:0005524">
    <property type="term" value="F:ATP binding"/>
    <property type="evidence" value="ECO:0007669"/>
    <property type="project" value="UniProtKB-KW"/>
</dbReference>
<dbReference type="GO" id="GO:0003677">
    <property type="term" value="F:DNA binding"/>
    <property type="evidence" value="ECO:0007669"/>
    <property type="project" value="UniProtKB-UniRule"/>
</dbReference>
<dbReference type="GO" id="GO:0003918">
    <property type="term" value="F:DNA topoisomerase type II (double strand cut, ATP-hydrolyzing) activity"/>
    <property type="evidence" value="ECO:0007669"/>
    <property type="project" value="UniProtKB-UniRule"/>
</dbReference>
<dbReference type="GO" id="GO:0000287">
    <property type="term" value="F:magnesium ion binding"/>
    <property type="evidence" value="ECO:0007669"/>
    <property type="project" value="UniProtKB-UniRule"/>
</dbReference>
<dbReference type="GO" id="GO:0006265">
    <property type="term" value="P:DNA topological change"/>
    <property type="evidence" value="ECO:0007669"/>
    <property type="project" value="UniProtKB-UniRule"/>
</dbReference>
<dbReference type="CDD" id="cd00223">
    <property type="entry name" value="TOPRIM_TopoIIB_SPO"/>
    <property type="match status" value="1"/>
</dbReference>
<dbReference type="FunFam" id="3.40.1360.10:FF:000011">
    <property type="entry name" value="Type 2 DNA topoisomerase 6 subunit A"/>
    <property type="match status" value="1"/>
</dbReference>
<dbReference type="Gene3D" id="3.40.1360.10">
    <property type="match status" value="1"/>
</dbReference>
<dbReference type="Gene3D" id="1.10.10.10">
    <property type="entry name" value="Winged helix-like DNA-binding domain superfamily/Winged helix DNA-binding domain"/>
    <property type="match status" value="1"/>
</dbReference>
<dbReference type="HAMAP" id="MF_00132">
    <property type="entry name" value="Top6A"/>
    <property type="match status" value="1"/>
</dbReference>
<dbReference type="InterPro" id="IPR002815">
    <property type="entry name" value="Spo11/TopoVI_A"/>
</dbReference>
<dbReference type="InterPro" id="IPR013049">
    <property type="entry name" value="Spo11/TopoVI_A_N"/>
</dbReference>
<dbReference type="InterPro" id="IPR036078">
    <property type="entry name" value="Spo11/TopoVI_A_sf"/>
</dbReference>
<dbReference type="InterPro" id="IPR049333">
    <property type="entry name" value="Topo_VI_alpha"/>
</dbReference>
<dbReference type="InterPro" id="IPR004085">
    <property type="entry name" value="TopoVI_A"/>
</dbReference>
<dbReference type="InterPro" id="IPR034136">
    <property type="entry name" value="TOPRIM_Topo6A/Spo11"/>
</dbReference>
<dbReference type="InterPro" id="IPR036388">
    <property type="entry name" value="WH-like_DNA-bd_sf"/>
</dbReference>
<dbReference type="NCBIfam" id="NF003333">
    <property type="entry name" value="PRK04342.1-2"/>
    <property type="match status" value="1"/>
</dbReference>
<dbReference type="PANTHER" id="PTHR10848">
    <property type="entry name" value="MEIOTIC RECOMBINATION PROTEIN SPO11"/>
    <property type="match status" value="1"/>
</dbReference>
<dbReference type="PANTHER" id="PTHR10848:SF0">
    <property type="entry name" value="MEIOTIC RECOMBINATION PROTEIN SPO11"/>
    <property type="match status" value="1"/>
</dbReference>
<dbReference type="Pfam" id="PF21180">
    <property type="entry name" value="TOP6A-Spo11_Toprim"/>
    <property type="match status" value="1"/>
</dbReference>
<dbReference type="Pfam" id="PF20768">
    <property type="entry name" value="Topo_VI_alpha"/>
    <property type="match status" value="1"/>
</dbReference>
<dbReference type="Pfam" id="PF04406">
    <property type="entry name" value="TP6A_N"/>
    <property type="match status" value="1"/>
</dbReference>
<dbReference type="PRINTS" id="PR01550">
    <property type="entry name" value="TOP6AFAMILY"/>
</dbReference>
<dbReference type="PRINTS" id="PR01552">
    <property type="entry name" value="TPISMRASE6A"/>
</dbReference>
<dbReference type="SUPFAM" id="SSF56726">
    <property type="entry name" value="DNA topoisomerase IV, alpha subunit"/>
    <property type="match status" value="1"/>
</dbReference>
<dbReference type="PROSITE" id="PS52041">
    <property type="entry name" value="TOPO_IIB"/>
    <property type="match status" value="1"/>
</dbReference>
<name>TOP6A_PYRHO</name>
<feature type="chain" id="PRO_0000145454" description="Type 2 DNA topoisomerase 6 subunit A">
    <location>
        <begin position="1"/>
        <end position="382"/>
    </location>
</feature>
<feature type="domain" description="Topo IIA-type catalytic" evidence="2">
    <location>
        <begin position="14"/>
        <end position="155"/>
    </location>
</feature>
<feature type="active site" description="O-(5'-phospho-DNA)-tyrosine intermediate" evidence="2">
    <location>
        <position position="108"/>
    </location>
</feature>
<feature type="binding site" evidence="1">
    <location>
        <position position="202"/>
    </location>
    <ligand>
        <name>Mg(2+)</name>
        <dbReference type="ChEBI" id="CHEBI:18420"/>
    </ligand>
</feature>
<feature type="binding site" evidence="1">
    <location>
        <position position="254"/>
    </location>
    <ligand>
        <name>Mg(2+)</name>
        <dbReference type="ChEBI" id="CHEBI:18420"/>
    </ligand>
</feature>
<evidence type="ECO:0000255" key="1">
    <source>
        <dbReference type="HAMAP-Rule" id="MF_00132"/>
    </source>
</evidence>
<evidence type="ECO:0000255" key="2">
    <source>
        <dbReference type="PROSITE-ProRule" id="PRU01385"/>
    </source>
</evidence>
<evidence type="ECO:0000305" key="3"/>